<gene>
    <name evidence="1" type="primary">nei</name>
    <name type="ordered locus">SF0583</name>
    <name type="ordered locus">S0596</name>
</gene>
<proteinExistence type="inferred from homology"/>
<comment type="function">
    <text evidence="1">Involved in base excision repair of DNA damaged by oxidation or by mutagenic agents. Acts as a DNA glycosylase that recognizes and removes damaged bases. Has a preference for oxidized pyrimidines, such as thymine glycol, 5,6-dihydrouracil and 5,6-dihydrothymine. Has AP (apurinic/apyrimidinic) lyase activity and introduces nicks in the DNA strand. Cleaves the DNA backbone by beta-delta elimination to generate a single-strand break at the site of the removed base with both 3'- and 5'-phosphates.</text>
</comment>
<comment type="catalytic activity">
    <reaction evidence="1">
        <text>2'-deoxyribonucleotide-(2'-deoxyribose 5'-phosphate)-2'-deoxyribonucleotide-DNA = a 3'-end 2'-deoxyribonucleotide-(2,3-dehydro-2,3-deoxyribose 5'-phosphate)-DNA + a 5'-end 5'-phospho-2'-deoxyribonucleoside-DNA + H(+)</text>
        <dbReference type="Rhea" id="RHEA:66592"/>
        <dbReference type="Rhea" id="RHEA-COMP:13180"/>
        <dbReference type="Rhea" id="RHEA-COMP:16897"/>
        <dbReference type="Rhea" id="RHEA-COMP:17067"/>
        <dbReference type="ChEBI" id="CHEBI:15378"/>
        <dbReference type="ChEBI" id="CHEBI:136412"/>
        <dbReference type="ChEBI" id="CHEBI:157695"/>
        <dbReference type="ChEBI" id="CHEBI:167181"/>
        <dbReference type="EC" id="4.2.99.18"/>
    </reaction>
</comment>
<comment type="cofactor">
    <cofactor evidence="1">
        <name>Zn(2+)</name>
        <dbReference type="ChEBI" id="CHEBI:29105"/>
    </cofactor>
    <text evidence="1">Binds 1 zinc ion per subunit.</text>
</comment>
<comment type="similarity">
    <text evidence="1">Belongs to the FPG family.</text>
</comment>
<evidence type="ECO:0000255" key="1">
    <source>
        <dbReference type="HAMAP-Rule" id="MF_01253"/>
    </source>
</evidence>
<feature type="initiator methionine" description="Removed" evidence="1">
    <location>
        <position position="1"/>
    </location>
</feature>
<feature type="chain" id="PRO_0000170899" description="Endonuclease 8">
    <location>
        <begin position="2"/>
        <end position="263"/>
    </location>
</feature>
<feature type="zinc finger region" description="FPG-type" evidence="1">
    <location>
        <begin position="229"/>
        <end position="263"/>
    </location>
</feature>
<feature type="active site" description="Schiff-base intermediate with DNA" evidence="1">
    <location>
        <position position="2"/>
    </location>
</feature>
<feature type="active site" description="Proton donor" evidence="1">
    <location>
        <position position="3"/>
    </location>
</feature>
<feature type="active site" description="Proton donor; for beta-elimination activity" evidence="1">
    <location>
        <position position="53"/>
    </location>
</feature>
<feature type="active site" description="Proton donor; for delta-elimination activity" evidence="1">
    <location>
        <position position="253"/>
    </location>
</feature>
<feature type="binding site" evidence="1">
    <location>
        <position position="70"/>
    </location>
    <ligand>
        <name>DNA</name>
        <dbReference type="ChEBI" id="CHEBI:16991"/>
    </ligand>
</feature>
<feature type="binding site" evidence="1">
    <location>
        <position position="125"/>
    </location>
    <ligand>
        <name>DNA</name>
        <dbReference type="ChEBI" id="CHEBI:16991"/>
    </ligand>
</feature>
<feature type="binding site" evidence="1">
    <location>
        <position position="169"/>
    </location>
    <ligand>
        <name>DNA</name>
        <dbReference type="ChEBI" id="CHEBI:16991"/>
    </ligand>
</feature>
<organism>
    <name type="scientific">Shigella flexneri</name>
    <dbReference type="NCBI Taxonomy" id="623"/>
    <lineage>
        <taxon>Bacteria</taxon>
        <taxon>Pseudomonadati</taxon>
        <taxon>Pseudomonadota</taxon>
        <taxon>Gammaproteobacteria</taxon>
        <taxon>Enterobacterales</taxon>
        <taxon>Enterobacteriaceae</taxon>
        <taxon>Shigella</taxon>
    </lineage>
</organism>
<keyword id="KW-0227">DNA damage</keyword>
<keyword id="KW-0234">DNA repair</keyword>
<keyword id="KW-0238">DNA-binding</keyword>
<keyword id="KW-0326">Glycosidase</keyword>
<keyword id="KW-0378">Hydrolase</keyword>
<keyword id="KW-0456">Lyase</keyword>
<keyword id="KW-0479">Metal-binding</keyword>
<keyword id="KW-0511">Multifunctional enzyme</keyword>
<keyword id="KW-1185">Reference proteome</keyword>
<keyword id="KW-0862">Zinc</keyword>
<keyword id="KW-0863">Zinc-finger</keyword>
<reference key="1">
    <citation type="journal article" date="2002" name="Nucleic Acids Res.">
        <title>Genome sequence of Shigella flexneri 2a: insights into pathogenicity through comparison with genomes of Escherichia coli K12 and O157.</title>
        <authorList>
            <person name="Jin Q."/>
            <person name="Yuan Z."/>
            <person name="Xu J."/>
            <person name="Wang Y."/>
            <person name="Shen Y."/>
            <person name="Lu W."/>
            <person name="Wang J."/>
            <person name="Liu H."/>
            <person name="Yang J."/>
            <person name="Yang F."/>
            <person name="Zhang X."/>
            <person name="Zhang J."/>
            <person name="Yang G."/>
            <person name="Wu H."/>
            <person name="Qu D."/>
            <person name="Dong J."/>
            <person name="Sun L."/>
            <person name="Xue Y."/>
            <person name="Zhao A."/>
            <person name="Gao Y."/>
            <person name="Zhu J."/>
            <person name="Kan B."/>
            <person name="Ding K."/>
            <person name="Chen S."/>
            <person name="Cheng H."/>
            <person name="Yao Z."/>
            <person name="He B."/>
            <person name="Chen R."/>
            <person name="Ma D."/>
            <person name="Qiang B."/>
            <person name="Wen Y."/>
            <person name="Hou Y."/>
            <person name="Yu J."/>
        </authorList>
    </citation>
    <scope>NUCLEOTIDE SEQUENCE [LARGE SCALE GENOMIC DNA]</scope>
    <source>
        <strain>301 / Serotype 2a</strain>
    </source>
</reference>
<reference key="2">
    <citation type="journal article" date="2003" name="Infect. Immun.">
        <title>Complete genome sequence and comparative genomics of Shigella flexneri serotype 2a strain 2457T.</title>
        <authorList>
            <person name="Wei J."/>
            <person name="Goldberg M.B."/>
            <person name="Burland V."/>
            <person name="Venkatesan M.M."/>
            <person name="Deng W."/>
            <person name="Fournier G."/>
            <person name="Mayhew G.F."/>
            <person name="Plunkett G. III"/>
            <person name="Rose D.J."/>
            <person name="Darling A."/>
            <person name="Mau B."/>
            <person name="Perna N.T."/>
            <person name="Payne S.M."/>
            <person name="Runyen-Janecky L.J."/>
            <person name="Zhou S."/>
            <person name="Schwartz D.C."/>
            <person name="Blattner F.R."/>
        </authorList>
    </citation>
    <scope>NUCLEOTIDE SEQUENCE [LARGE SCALE GENOMIC DNA]</scope>
    <source>
        <strain>ATCC 700930 / 2457T / Serotype 2a</strain>
    </source>
</reference>
<sequence length="263" mass="29842">MPEGPEIRRAADNLEAAIKGKPLTDVWFAFPQLKTYQSQLIGQHVTHVETRGKALLTHFPNGLTLYSHNQLYGVWRVVDTGEEPQTTRVLRVKLQTADKTILLYSASDIEMLRPEQLTTHPFLQRVGPDVLDPNLTPEVVKERLLSPRFRNRQFAGLLLDQAFLAGLGNYLRVEILWQVGLTGNHKAKDLNAAQLDALAHALLEIPRFSYATRGQVDENKHHGALFRFKVFHRDGELCERCGGIIEKTTLSSRPFYWCPGCQH</sequence>
<name>END8_SHIFL</name>
<accession>Q83LZ7</accession>
<accession>Q7C2P2</accession>
<protein>
    <recommendedName>
        <fullName evidence="1">Endonuclease 8</fullName>
    </recommendedName>
    <alternativeName>
        <fullName evidence="1">DNA glycosylase/AP lyase Nei</fullName>
        <ecNumber evidence="1">3.2.2.-</ecNumber>
        <ecNumber evidence="1">4.2.99.18</ecNumber>
    </alternativeName>
    <alternativeName>
        <fullName evidence="1">DNA-(apurinic or apyrimidinic site) lyase Nei</fullName>
    </alternativeName>
    <alternativeName>
        <fullName evidence="1">Endonuclease VIII</fullName>
    </alternativeName>
</protein>
<dbReference type="EC" id="3.2.2.-" evidence="1"/>
<dbReference type="EC" id="4.2.99.18" evidence="1"/>
<dbReference type="EMBL" id="AE005674">
    <property type="protein sequence ID" value="AAN42226.1"/>
    <property type="molecule type" value="Genomic_DNA"/>
</dbReference>
<dbReference type="EMBL" id="AE014073">
    <property type="protein sequence ID" value="AAP16099.1"/>
    <property type="molecule type" value="Genomic_DNA"/>
</dbReference>
<dbReference type="RefSeq" id="NP_706519.1">
    <property type="nucleotide sequence ID" value="NC_004337.2"/>
</dbReference>
<dbReference type="RefSeq" id="WP_001114016.1">
    <property type="nucleotide sequence ID" value="NZ_WPGW01000035.1"/>
</dbReference>
<dbReference type="SMR" id="Q83LZ7"/>
<dbReference type="STRING" id="198214.SF0583"/>
<dbReference type="PaxDb" id="198214-SF0583"/>
<dbReference type="GeneID" id="1023561"/>
<dbReference type="KEGG" id="sfl:SF0583"/>
<dbReference type="KEGG" id="sfx:S0596"/>
<dbReference type="PATRIC" id="fig|198214.7.peg.677"/>
<dbReference type="HOGENOM" id="CLU_038423_2_2_6"/>
<dbReference type="Proteomes" id="UP000001006">
    <property type="component" value="Chromosome"/>
</dbReference>
<dbReference type="Proteomes" id="UP000002673">
    <property type="component" value="Chromosome"/>
</dbReference>
<dbReference type="GO" id="GO:0140078">
    <property type="term" value="F:class I DNA-(apurinic or apyrimidinic site) endonuclease activity"/>
    <property type="evidence" value="ECO:0007669"/>
    <property type="project" value="UniProtKB-EC"/>
</dbReference>
<dbReference type="GO" id="GO:0003684">
    <property type="term" value="F:damaged DNA binding"/>
    <property type="evidence" value="ECO:0007669"/>
    <property type="project" value="InterPro"/>
</dbReference>
<dbReference type="GO" id="GO:0000703">
    <property type="term" value="F:oxidized pyrimidine nucleobase lesion DNA N-glycosylase activity"/>
    <property type="evidence" value="ECO:0007669"/>
    <property type="project" value="UniProtKB-UniRule"/>
</dbReference>
<dbReference type="GO" id="GO:0008270">
    <property type="term" value="F:zinc ion binding"/>
    <property type="evidence" value="ECO:0007669"/>
    <property type="project" value="UniProtKB-UniRule"/>
</dbReference>
<dbReference type="GO" id="GO:0006284">
    <property type="term" value="P:base-excision repair"/>
    <property type="evidence" value="ECO:0007669"/>
    <property type="project" value="InterPro"/>
</dbReference>
<dbReference type="CDD" id="cd08965">
    <property type="entry name" value="EcNei-like_N"/>
    <property type="match status" value="1"/>
</dbReference>
<dbReference type="FunFam" id="1.10.8.50:FF:000005">
    <property type="entry name" value="Endonuclease 8"/>
    <property type="match status" value="1"/>
</dbReference>
<dbReference type="FunFam" id="3.20.190.10:FF:000002">
    <property type="entry name" value="Endonuclease 8"/>
    <property type="match status" value="1"/>
</dbReference>
<dbReference type="Gene3D" id="1.10.8.50">
    <property type="match status" value="1"/>
</dbReference>
<dbReference type="Gene3D" id="3.20.190.10">
    <property type="entry name" value="MutM-like, N-terminal"/>
    <property type="match status" value="1"/>
</dbReference>
<dbReference type="HAMAP" id="MF_01253">
    <property type="entry name" value="Endonuclease_8"/>
    <property type="match status" value="1"/>
</dbReference>
<dbReference type="InterPro" id="IPR015886">
    <property type="entry name" value="DNA_glyclase/AP_lyase_DNA-bd"/>
</dbReference>
<dbReference type="InterPro" id="IPR015887">
    <property type="entry name" value="DNA_glyclase_Znf_dom_DNA_BS"/>
</dbReference>
<dbReference type="InterPro" id="IPR044091">
    <property type="entry name" value="EcNei-like_N"/>
</dbReference>
<dbReference type="InterPro" id="IPR023713">
    <property type="entry name" value="Endonuclease-VIII"/>
</dbReference>
<dbReference type="InterPro" id="IPR012319">
    <property type="entry name" value="FPG_cat"/>
</dbReference>
<dbReference type="InterPro" id="IPR035937">
    <property type="entry name" value="MutM-like_N-ter"/>
</dbReference>
<dbReference type="InterPro" id="IPR010979">
    <property type="entry name" value="Ribosomal_uS13-like_H2TH"/>
</dbReference>
<dbReference type="InterPro" id="IPR000214">
    <property type="entry name" value="Znf_DNA_glyclase/AP_lyase"/>
</dbReference>
<dbReference type="InterPro" id="IPR010663">
    <property type="entry name" value="Znf_FPG/IleRS"/>
</dbReference>
<dbReference type="NCBIfam" id="NF007763">
    <property type="entry name" value="PRK10445.1"/>
    <property type="match status" value="1"/>
</dbReference>
<dbReference type="PANTHER" id="PTHR42697">
    <property type="entry name" value="ENDONUCLEASE 8"/>
    <property type="match status" value="1"/>
</dbReference>
<dbReference type="PANTHER" id="PTHR42697:SF1">
    <property type="entry name" value="ENDONUCLEASE 8"/>
    <property type="match status" value="1"/>
</dbReference>
<dbReference type="Pfam" id="PF01149">
    <property type="entry name" value="Fapy_DNA_glyco"/>
    <property type="match status" value="1"/>
</dbReference>
<dbReference type="Pfam" id="PF06831">
    <property type="entry name" value="H2TH"/>
    <property type="match status" value="1"/>
</dbReference>
<dbReference type="Pfam" id="PF06827">
    <property type="entry name" value="zf-FPG_IleRS"/>
    <property type="match status" value="1"/>
</dbReference>
<dbReference type="SMART" id="SM00898">
    <property type="entry name" value="Fapy_DNA_glyco"/>
    <property type="match status" value="1"/>
</dbReference>
<dbReference type="SMART" id="SM01232">
    <property type="entry name" value="H2TH"/>
    <property type="match status" value="1"/>
</dbReference>
<dbReference type="SUPFAM" id="SSF57716">
    <property type="entry name" value="Glucocorticoid receptor-like (DNA-binding domain)"/>
    <property type="match status" value="1"/>
</dbReference>
<dbReference type="SUPFAM" id="SSF81624">
    <property type="entry name" value="N-terminal domain of MutM-like DNA repair proteins"/>
    <property type="match status" value="1"/>
</dbReference>
<dbReference type="SUPFAM" id="SSF46946">
    <property type="entry name" value="S13-like H2TH domain"/>
    <property type="match status" value="1"/>
</dbReference>
<dbReference type="PROSITE" id="PS51068">
    <property type="entry name" value="FPG_CAT"/>
    <property type="match status" value="1"/>
</dbReference>
<dbReference type="PROSITE" id="PS01242">
    <property type="entry name" value="ZF_FPG_1"/>
    <property type="match status" value="1"/>
</dbReference>
<dbReference type="PROSITE" id="PS51066">
    <property type="entry name" value="ZF_FPG_2"/>
    <property type="match status" value="1"/>
</dbReference>